<keyword id="KW-0002">3D-structure</keyword>
<keyword id="KW-0046">Antibiotic resistance</keyword>
<keyword id="KW-0903">Direct protein sequencing</keyword>
<keyword id="KW-0378">Hydrolase</keyword>
<keyword id="KW-0964">Secreted</keyword>
<keyword id="KW-0732">Signal</keyword>
<dbReference type="EC" id="3.5.2.6" evidence="5 7 8"/>
<dbReference type="EMBL" id="Z21957">
    <property type="protein sequence ID" value="CAA79968.1"/>
    <property type="molecule type" value="Genomic_DNA"/>
</dbReference>
<dbReference type="PIR" id="S35931">
    <property type="entry name" value="S35931"/>
</dbReference>
<dbReference type="PDB" id="1E25">
    <property type="method" value="X-ray"/>
    <property type="resolution" value="1.90 A"/>
    <property type="chains" value="A=27-308"/>
</dbReference>
<dbReference type="PDBsum" id="1E25"/>
<dbReference type="SMR" id="P37321"/>
<dbReference type="DrugBank" id="DB09060">
    <property type="generic name" value="Avibactam"/>
</dbReference>
<dbReference type="DrugBank" id="DB18716">
    <property type="generic name" value="Enmetazobactam"/>
</dbReference>
<dbReference type="CARD" id="ARO:3002363">
    <property type="molecule name" value="PER-1"/>
    <property type="mechanism identifier" value="ARO:0001004"/>
    <property type="mechanism name" value="antibiotic inactivation"/>
</dbReference>
<dbReference type="KEGG" id="ag:CAA79968"/>
<dbReference type="SABIO-RK" id="P37321"/>
<dbReference type="EvolutionaryTrace" id="P37321"/>
<dbReference type="GO" id="GO:0005576">
    <property type="term" value="C:extracellular region"/>
    <property type="evidence" value="ECO:0007669"/>
    <property type="project" value="UniProtKB-SubCell"/>
</dbReference>
<dbReference type="GO" id="GO:0008800">
    <property type="term" value="F:beta-lactamase activity"/>
    <property type="evidence" value="ECO:0007669"/>
    <property type="project" value="UniProtKB-EC"/>
</dbReference>
<dbReference type="GO" id="GO:0030655">
    <property type="term" value="P:beta-lactam antibiotic catabolic process"/>
    <property type="evidence" value="ECO:0007669"/>
    <property type="project" value="InterPro"/>
</dbReference>
<dbReference type="GO" id="GO:0046677">
    <property type="term" value="P:response to antibiotic"/>
    <property type="evidence" value="ECO:0007669"/>
    <property type="project" value="UniProtKB-KW"/>
</dbReference>
<dbReference type="Gene3D" id="3.40.710.10">
    <property type="entry name" value="DD-peptidase/beta-lactamase superfamily"/>
    <property type="match status" value="1"/>
</dbReference>
<dbReference type="InterPro" id="IPR012338">
    <property type="entry name" value="Beta-lactam/transpept-like"/>
</dbReference>
<dbReference type="InterPro" id="IPR045155">
    <property type="entry name" value="Beta-lactam_cat"/>
</dbReference>
<dbReference type="InterPro" id="IPR000871">
    <property type="entry name" value="Beta-lactam_class-A"/>
</dbReference>
<dbReference type="InterPro" id="IPR023650">
    <property type="entry name" value="Beta-lactam_class-A_AS"/>
</dbReference>
<dbReference type="NCBIfam" id="NF033103">
    <property type="entry name" value="bla_class_A"/>
    <property type="match status" value="1"/>
</dbReference>
<dbReference type="NCBIfam" id="NF000389">
    <property type="entry name" value="blaPER"/>
    <property type="match status" value="1"/>
</dbReference>
<dbReference type="NCBIfam" id="NF012099">
    <property type="entry name" value="SubclassA2"/>
    <property type="match status" value="1"/>
</dbReference>
<dbReference type="PANTHER" id="PTHR35333">
    <property type="entry name" value="BETA-LACTAMASE"/>
    <property type="match status" value="1"/>
</dbReference>
<dbReference type="PANTHER" id="PTHR35333:SF3">
    <property type="entry name" value="BETA-LACTAMASE-TYPE TRANSPEPTIDASE FOLD CONTAINING PROTEIN"/>
    <property type="match status" value="1"/>
</dbReference>
<dbReference type="Pfam" id="PF13354">
    <property type="entry name" value="Beta-lactamase2"/>
    <property type="match status" value="1"/>
</dbReference>
<dbReference type="PRINTS" id="PR00118">
    <property type="entry name" value="BLACTAMASEA"/>
</dbReference>
<dbReference type="SUPFAM" id="SSF56601">
    <property type="entry name" value="beta-lactamase/transpeptidase-like"/>
    <property type="match status" value="1"/>
</dbReference>
<dbReference type="PROSITE" id="PS00146">
    <property type="entry name" value="BETA_LACTAMASE_A"/>
    <property type="match status" value="1"/>
</dbReference>
<evidence type="ECO:0000250" key="1">
    <source>
        <dbReference type="UniProtKB" id="A0A5R8T042"/>
    </source>
</evidence>
<evidence type="ECO:0000250" key="2">
    <source>
        <dbReference type="UniProtKB" id="P9WKD3"/>
    </source>
</evidence>
<evidence type="ECO:0000255" key="3"/>
<evidence type="ECO:0000255" key="4">
    <source>
        <dbReference type="PROSITE-ProRule" id="PRU10101"/>
    </source>
</evidence>
<evidence type="ECO:0000269" key="5">
    <source>
    </source>
</evidence>
<evidence type="ECO:0000269" key="6">
    <source>
    </source>
</evidence>
<evidence type="ECO:0000269" key="7">
    <source>
    </source>
</evidence>
<evidence type="ECO:0000269" key="8">
    <source>
    </source>
</evidence>
<evidence type="ECO:0000303" key="9">
    <source>
    </source>
</evidence>
<evidence type="ECO:0000303" key="10">
    <source>
    </source>
</evidence>
<evidence type="ECO:0000303" key="11">
    <source>
    </source>
</evidence>
<evidence type="ECO:0000303" key="12">
    <source>
    </source>
</evidence>
<evidence type="ECO:0000303" key="13">
    <source>
    </source>
</evidence>
<evidence type="ECO:0000305" key="14"/>
<evidence type="ECO:0000305" key="15">
    <source>
    </source>
</evidence>
<evidence type="ECO:0007744" key="16">
    <source>
        <dbReference type="PDB" id="1E25"/>
    </source>
</evidence>
<evidence type="ECO:0007829" key="17">
    <source>
        <dbReference type="PDB" id="1E25"/>
    </source>
</evidence>
<comment type="function">
    <text evidence="5 7 8">Extended-spectrum beta-lactamase (ESBL) which confers resistance to penicillins, as well as first-, second- and third-generation cephalosporins, but not the carbapenem, imipenem, in the JM109 strain of E.coli (PubMed:8517722). Has cefotaxime-hydrolyzing activity (PubMed:10325401, PubMed:8517722, PubMed:9494118).</text>
</comment>
<comment type="catalytic activity">
    <reaction evidence="5 7 8">
        <text>a beta-lactam + H2O = a substituted beta-amino acid</text>
        <dbReference type="Rhea" id="RHEA:20401"/>
        <dbReference type="ChEBI" id="CHEBI:15377"/>
        <dbReference type="ChEBI" id="CHEBI:35627"/>
        <dbReference type="ChEBI" id="CHEBI:140347"/>
        <dbReference type="EC" id="3.5.2.6"/>
    </reaction>
</comment>
<comment type="activity regulation">
    <text evidence="7">Inhibited by the beta-lactamase-blocking agents clavulanic acid, tazobactam and sulbactam (PubMed:8517722). Not inhibited by EDTA (PubMed:8517722).</text>
</comment>
<comment type="biophysicochemical properties">
    <kinetics>
        <KM evidence="7">54 uM for amoxicillin (at pH 7.0 and 37 degrees Celsius)</KM>
        <KM evidence="7">1.7 uM for ticarcillin (at pH 7.0 and 37 degrees Celsius)</KM>
        <KM evidence="8">31.3 uM for benzylpenicillin (at pH 7.0 and 30 degrees Celsius)</KM>
        <KM evidence="5">27 uM for benzylpenicillin (at pH 7.0 and 30 degrees Celsius)</KM>
        <KM evidence="7">2.5 uM for benzylpenicillin (at pH 7.0 and 37 degrees Celsius)</KM>
        <KM evidence="8">46 uM for cephalothin (at pH 7.0 and 30 degrees Celsius)</KM>
        <KM evidence="5">23 uM for cephalothin (at pH 7.0 and 30 degrees Celsius)</KM>
        <KM evidence="7">7 uM for cephalothin (at pH 7.0 and 37 degrees Celsius)</KM>
        <KM evidence="8">237 uM for cephaloridine (at pH 7.0 and 30 degrees Celsius)</KM>
        <KM evidence="7">16 uM for cephaloridine (at pH 7.0 and 37 degrees Celsius)</KM>
        <KM evidence="7">13 uM for cefamandole (at pH 7.0 and 37 degrees Celsius)</KM>
        <KM evidence="7">18 uM for cefuroxime (at pH 7.0 and 37 degrees Celsius)</KM>
        <KM evidence="8">652 uM for cefotaxime (at pH 7.0 and 30 degrees Celsius)</KM>
        <KM evidence="5">441 uM for cefotaxime (at pH 7.0 and 30 degrees Celsius)</KM>
        <KM evidence="7">26 uM for cefotaxime (at pH 7.0 and 37 degrees Celsius)</KM>
        <KM evidence="8">3519 uM for ceftazidime (at pH 7.0 and 30 degrees Celsius)</KM>
        <KM evidence="5">4150 uM for ceftazidime (at pH 7.0 and 30 degrees Celsius)</KM>
        <KM evidence="7">148 uM for ceftazidime (at pH 7.0 and 37 degrees Celsius)</KM>
        <KM evidence="7">15 uM for ceftriaxone (at pH 7.0 and 37 degrees Celsius)</KM>
        <KM evidence="7">35 uM for cefpirome (at pH 7.0 and 37 degrees Celsius)</KM>
        <KM evidence="8">44.2 uM for aztreonam (at pH 7.0 and 30 degrees Celsius)</KM>
        <KM evidence="5">147 uM for aztreonam (at pH 7.0 and 30 degrees Celsius)</KM>
        <KM evidence="7">23 uM for aztreonam (at pH 7.0 and 37 degrees Celsius)</KM>
        <text evidence="5 8">kcat is 7.2 sec(-1) with benzylpenicillin as substrate (at pH 7.0 and 30 degrees Celsius) (PubMed:9494118). kcat is 8 sec(-1) with benzylpenicillin as substrate (at pH 7.0 and 30 degrees Celsius) (PubMed:10325401). kcat is 12.4 sec(-1) with cephalothin as substrate (at pH 7.0 and 30 degrees Celsius) (PubMed:9494118). kcat is 8 sec(-1) with cephalothin as substrate (at pH 7.0 and 30 degrees Celsius) (PubMed:10325401). kcat is 13 sec(-1) with cephaloridine as substrate (at pH 7.0 and 30 degrees Celsius) (PubMed:9494118). kcat is 43 sec(-1) with cefotaxime as substrate (at pH 7.0 and 30 degrees Celsius) (PubMed:9494118). kcat is 41 sec(-1) with cefotaxime as substrate (at pH 7.0 and 30 degrees Celsius) (PubMed:10325401). kcat is 70 sec(-1) with ceftazidime as substrate (at pH 7.0 and 30 degrees Celsius) (PubMed:9494118). kcat is 109 sec(-1) with ceftazidime as substrate (at pH 7.0 and 30 degrees Celsius) (PubMed:10325401). kcat is 4.3 sec(-1) with aztreonam as substrate (at pH 7.0 and 30 degrees Celsius) (PubMed:9494118). kcat is 11 sec(-1) with aztreonam as substrate (at pH 7.0 and 30 degrees Celsius) (PubMed:10325401).</text>
    </kinetics>
</comment>
<comment type="subunit">
    <text evidence="2">Monomer.</text>
</comment>
<comment type="subcellular location">
    <subcellularLocation>
        <location evidence="1">Secreted</location>
    </subcellularLocation>
</comment>
<comment type="induction">
    <text evidence="6">Expression is up-regulated by an upstream promoter, active in P.aeruginosa, but probably not in E.coli.</text>
</comment>
<comment type="miscellaneous">
    <text evidence="15">The class A beta-lactamase family has a specific amino-acid numbering system, sometimes called Ambler or ABL numbering and often misspelt as Amber. A multiple sequence alignment was used to derive a consensus sequence and then the consensus was numbered taking into account insertions and deletions. This allows use of identical numbers, e.g. for active site residues, despite differences in protein length. UniProt always uses natural numbering of residues, hence there appear to be differences in numbering between this entry and some papers.</text>
</comment>
<comment type="similarity">
    <text evidence="14">Belongs to the class-A beta-lactamase family.</text>
</comment>
<organism>
    <name type="scientific">Pseudomonas aeruginosa</name>
    <dbReference type="NCBI Taxonomy" id="287"/>
    <lineage>
        <taxon>Bacteria</taxon>
        <taxon>Pseudomonadati</taxon>
        <taxon>Pseudomonadota</taxon>
        <taxon>Gammaproteobacteria</taxon>
        <taxon>Pseudomonadales</taxon>
        <taxon>Pseudomonadaceae</taxon>
        <taxon>Pseudomonas</taxon>
    </lineage>
</organism>
<sequence>MNVIIKAVVTASTLLMVSFSSFETSAQSPLLKEQIESIVIGKKATVGVAVWGPDDLEPLLINPFEKFPMQSVFKLHLAMLVLHQVDQGKLDLNQTVIVNRAKVLQNTWAPIMKAYQGDEFSVPVQQLLQYSVSHSDNVACDLLFELVGGPAALHDYIQSMGIKETAVVANEAQMHADDQVQYQNWTSMKGAAEILKKFEQKTQLSETSQALLWKWMVETTTGPERLKGLLPAGTVVAHKTGTSGIKAGKTAATNDLGIILLPDGRPLLVAVFVKDSAESSRTNEAIIAQVAQTAYQFELKKLSALSPN</sequence>
<protein>
    <recommendedName>
        <fullName evidence="9 10 11 12 13">Extended-spectrum beta-lactamase PER-1</fullName>
        <ecNumber evidence="5 7 8">3.5.2.6</ecNumber>
    </recommendedName>
</protein>
<accession>P37321</accession>
<reference key="1">
    <citation type="journal article" date="1994" name="Antimicrob. Agents Chemother.">
        <title>Sequence analysis of PER-1 extended-spectrum beta-lactamase from Pseudomonas aeruginosa and comparison with class A beta-lactamases.</title>
        <authorList>
            <person name="Nordmann P."/>
            <person name="Naas T."/>
        </authorList>
    </citation>
    <scope>NUCLEOTIDE SEQUENCE [GENOMIC DNA]</scope>
    <scope>PARTIAL PROTEIN SEQUENCE</scope>
    <scope>INDUCTION</scope>
    <source>
        <strain>RNL-1</strain>
    </source>
</reference>
<reference key="2">
    <citation type="journal article" date="1991" name="Biochem. J.">
        <title>A standard numbering scheme for the class A beta-lactamases.</title>
        <authorList>
            <person name="Ambler R.P."/>
            <person name="Coulson A.F."/>
            <person name="Frere J.M."/>
            <person name="Ghuysen J.M."/>
            <person name="Joris B."/>
            <person name="Forsman M."/>
            <person name="Levesque R.C."/>
            <person name="Tiraby G."/>
            <person name="Waley S.G."/>
        </authorList>
    </citation>
    <scope>AMINO ACID NUMBERING SCHEME</scope>
</reference>
<reference evidence="14" key="3">
    <citation type="journal article" date="1993" name="Antimicrob. Agents Chemother.">
        <title>Characterization of a novel extended-spectrum beta-lactamase from Pseudomonas aeruginosa.</title>
        <authorList>
            <person name="Nordmann P."/>
            <person name="Ronco E."/>
            <person name="Naas T."/>
            <person name="Duport C."/>
            <person name="Michel-Briand Y."/>
            <person name="Labia R."/>
        </authorList>
    </citation>
    <scope>FUNCTION</scope>
    <scope>CATALYTIC ACTIVITY</scope>
    <scope>ACTIVITY REGULATION</scope>
    <scope>BIOPHYSICOCHEMICAL PROPERTIES</scope>
    <source>
        <strain evidence="12">RNL-1</strain>
    </source>
</reference>
<reference evidence="14" key="4">
    <citation type="journal article" date="1998" name="Biochem. J.">
        <title>Role of residues 104, 164, 166, 238 and 240 in the substrate profile of PER-1 beta-lactamase hydrolysing third-generation cephalosporins.</title>
        <authorList>
            <person name="Bouthors A.T."/>
            <person name="Dagoneau-Blanchard N."/>
            <person name="Naas T."/>
            <person name="Nordmann P."/>
            <person name="Jarlier V."/>
            <person name="Sougakoff W."/>
        </authorList>
    </citation>
    <scope>FUNCTION</scope>
    <scope>CATALYTIC ACTIVITY</scope>
    <scope>BIOPHYSICOCHEMICAL PROPERTIES</scope>
    <scope>MUTAGENESIS OF GLN-105; ASN-106; THR-107; ALA-169 AND GLU-171</scope>
</reference>
<reference evidence="14" key="5">
    <citation type="journal article" date="1999" name="Protein Eng.">
        <title>Site-directed mutagenesis of residues 164, 170, 171, 179, 220, 237 and 242 in PER-1 beta-lactamase hydrolysing expanded-spectrum cephalosporins.</title>
        <authorList>
            <person name="Bouthors A.T."/>
            <person name="Delettre J."/>
            <person name="Mugnier P."/>
            <person name="Jarlier V."/>
            <person name="Sougakoff W."/>
        </authorList>
    </citation>
    <scope>FUNCTION</scope>
    <scope>CATALYTIC ACTIVITY</scope>
    <scope>BIOPHYSICOCHEMICAL PROPERTIES</scope>
    <scope>MUTAGENESIS OF ALA-169; HIS-175; ALA-176; ASN-184; ARG-225 AND THR-242</scope>
</reference>
<reference evidence="16" key="6">
    <citation type="journal article" date="2000" name="J. Biol. Chem.">
        <title>The high resolution crystal structure for class A beta-lactamase PER-1 reveals the bases for its increase in breadth of activity.</title>
        <authorList>
            <person name="Tranier S."/>
            <person name="Bouthors A.T."/>
            <person name="Maveyraud L."/>
            <person name="Guillet V."/>
            <person name="Sougakoff W."/>
            <person name="Samama J.P."/>
        </authorList>
    </citation>
    <scope>X-RAY CRYSTALLOGRAPHY (1.90 ANGSTROMS) OF 27-308</scope>
    <scope>ACTIVE SITE</scope>
</reference>
<proteinExistence type="evidence at protein level"/>
<gene>
    <name evidence="9 10 11 12 13" type="primary">PER-1</name>
    <name evidence="14" type="synonym">per1</name>
</gene>
<name>BLE1_PSEAI</name>
<feature type="signal peptide" evidence="3">
    <location>
        <begin position="1"/>
        <end position="26"/>
    </location>
</feature>
<feature type="chain" id="PRO_0000017042" description="Extended-spectrum beta-lactamase PER-1" evidence="3">
    <location>
        <begin position="27"/>
        <end position="308"/>
    </location>
</feature>
<feature type="active site" description="Nucleophile; acyl-ester intermediate" evidence="4 10">
    <location>
        <position position="71"/>
    </location>
</feature>
<feature type="binding site" evidence="1">
    <location>
        <position position="74"/>
    </location>
    <ligand>
        <name>a beta-lactam</name>
        <dbReference type="ChEBI" id="CHEBI:35627"/>
    </ligand>
</feature>
<feature type="binding site" evidence="1">
    <location>
        <position position="135"/>
    </location>
    <ligand>
        <name>a beta-lactam</name>
        <dbReference type="ChEBI" id="CHEBI:35627"/>
    </ligand>
</feature>
<feature type="binding site" evidence="1">
    <location>
        <position position="171"/>
    </location>
    <ligand>
        <name>a beta-lactam</name>
        <dbReference type="ChEBI" id="CHEBI:35627"/>
    </ligand>
</feature>
<feature type="mutagenesis site" description="Similar catalytic efficiency to wild-type with respect to benzyl penicillin, cephalosporins and aztreonam." evidence="8">
    <original>Q</original>
    <variation>G</variation>
    <location>
        <position position="105"/>
    </location>
</feature>
<feature type="mutagenesis site" description="Similar catalytic efficiency to wild-type with respect to benzyl penicillin, cephalosporins and aztreonam." evidence="8">
    <original>N</original>
    <variation>G</variation>
    <location>
        <position position="106"/>
    </location>
</feature>
<feature type="mutagenesis site" description="Abolishes hydrolysis of benzyl penicillin; reduces catalytic efficiency about 500-fold with respect to cefotaxime, about 15-fold with respect to ceftazidime and about 30-fold with respect to aztreonam." evidence="8">
    <original>T</original>
    <variation>E</variation>
    <location>
        <position position="107"/>
    </location>
</feature>
<feature type="mutagenesis site" description="Abolishes hydrolysis of benzyl penicillin, cephalosporins and aztreonam; similar catalytic efficiency to wild-type with respect to benzyl penicillin, cephalosporins and aztreonam when associated with E-176." evidence="5 8">
    <original>A</original>
    <variation>R</variation>
    <location>
        <position position="169"/>
    </location>
</feature>
<feature type="mutagenesis site" description="Similar catalytic efficiency to wild-type with respect to benzyl penicillin, cephalosporins and aztreonam." evidence="8">
    <original>A</original>
    <variation>S</variation>
    <location>
        <position position="169"/>
    </location>
</feature>
<feature type="mutagenesis site" description="Abolishes hydrolysis of benzyl penicillin, cephalothin and cefotaxime; reduces catalytic efficiency about 25-fold with respect to cephaloridine, about 10-fold with respect to ceftazidime, and about 30-fold with respect to caztreonam." evidence="8">
    <original>E</original>
    <variation>A</variation>
    <location>
        <position position="171"/>
    </location>
</feature>
<feature type="mutagenesis site" description="Similar catalytic efficiency to wild-type with respect to benzyl penicillin, cephalosporins and aztreonam." evidence="5">
    <original>H</original>
    <variation>N</variation>
    <location>
        <position position="175"/>
    </location>
</feature>
<feature type="mutagenesis site" description="Similar catalytic efficiency to wild-type with respect to benzyl penicillin, cephalosporins and aztreonam; catalytic efficiency similar when associated with R-169." evidence="5">
    <original>A</original>
    <variation>E</variation>
    <location>
        <position position="176"/>
    </location>
</feature>
<feature type="mutagenesis site" description="Abolishes hydrolysis of benzyl penicillin, cephalosporins and aztreonam." evidence="5">
    <original>N</original>
    <variation>D</variation>
    <location>
        <position position="184"/>
    </location>
</feature>
<feature type="mutagenesis site" description="Similar catalytic efficiency to wild-type with respect to benzyl penicillin, cephalosporins and aztreonam." evidence="5">
    <original>R</original>
    <variation>L</variation>
    <location>
        <position position="225"/>
    </location>
</feature>
<feature type="mutagenesis site" description="Increases catalytic efficiency about 5-15-fold with respect to cephalosporins and aztreonam. Similar catalytic efficiency to wild-type with respect to benzyl penicillin." evidence="5">
    <original>T</original>
    <variation>A</variation>
    <location>
        <position position="242"/>
    </location>
</feature>
<feature type="helix" evidence="17">
    <location>
        <begin position="29"/>
        <end position="39"/>
    </location>
</feature>
<feature type="strand" evidence="17">
    <location>
        <begin position="42"/>
        <end position="51"/>
    </location>
</feature>
<feature type="strand" evidence="17">
    <location>
        <begin position="59"/>
        <end position="62"/>
    </location>
</feature>
<feature type="helix" evidence="17">
    <location>
        <begin position="70"/>
        <end position="72"/>
    </location>
</feature>
<feature type="helix" evidence="17">
    <location>
        <begin position="73"/>
        <end position="86"/>
    </location>
</feature>
<feature type="strand" evidence="17">
    <location>
        <begin position="95"/>
        <end position="99"/>
    </location>
</feature>
<feature type="turn" evidence="17">
    <location>
        <begin position="100"/>
        <end position="102"/>
    </location>
</feature>
<feature type="helix" evidence="17">
    <location>
        <begin position="111"/>
        <end position="114"/>
    </location>
</feature>
<feature type="strand" evidence="17">
    <location>
        <begin position="117"/>
        <end position="123"/>
    </location>
</feature>
<feature type="helix" evidence="17">
    <location>
        <begin position="124"/>
        <end position="134"/>
    </location>
</feature>
<feature type="helix" evidence="17">
    <location>
        <begin position="137"/>
        <end position="147"/>
    </location>
</feature>
<feature type="helix" evidence="17">
    <location>
        <begin position="149"/>
        <end position="159"/>
    </location>
</feature>
<feature type="helix" evidence="17">
    <location>
        <begin position="171"/>
        <end position="176"/>
    </location>
</feature>
<feature type="helix" evidence="17">
    <location>
        <begin position="180"/>
        <end position="183"/>
    </location>
</feature>
<feature type="strand" evidence="17">
    <location>
        <begin position="184"/>
        <end position="186"/>
    </location>
</feature>
<feature type="helix" evidence="17">
    <location>
        <begin position="188"/>
        <end position="199"/>
    </location>
</feature>
<feature type="helix" evidence="17">
    <location>
        <begin position="206"/>
        <end position="217"/>
    </location>
</feature>
<feature type="turn" evidence="17">
    <location>
        <begin position="226"/>
        <end position="229"/>
    </location>
</feature>
<feature type="strand" evidence="17">
    <location>
        <begin position="236"/>
        <end position="242"/>
    </location>
</feature>
<feature type="strand" evidence="17">
    <location>
        <begin position="249"/>
        <end position="260"/>
    </location>
</feature>
<feature type="strand" evidence="17">
    <location>
        <begin position="266"/>
        <end position="276"/>
    </location>
</feature>
<feature type="helix" evidence="17">
    <location>
        <begin position="280"/>
        <end position="304"/>
    </location>
</feature>